<gene>
    <name evidence="2" type="primary">otsA</name>
    <name type="ordered locus">Z2949</name>
    <name type="ordered locus">ECs2604</name>
</gene>
<comment type="function">
    <text evidence="2">Probably involved in the osmoprotection via the biosynthesis of trehalose. Catalyzes the transfer of glucose from UDP-alpha-D-glucose (UDP-Glc) to D-glucose 6-phosphate (Glc-6-P) to form trehalose-6-phosphate. Acts with retention of the anomeric configuration of the UDP-sugar donor.</text>
</comment>
<comment type="catalytic activity">
    <reaction evidence="2">
        <text>D-glucose 6-phosphate + UDP-alpha-D-glucose = alpha,alpha-trehalose 6-phosphate + UDP + H(+)</text>
        <dbReference type="Rhea" id="RHEA:18889"/>
        <dbReference type="ChEBI" id="CHEBI:15378"/>
        <dbReference type="ChEBI" id="CHEBI:58223"/>
        <dbReference type="ChEBI" id="CHEBI:58429"/>
        <dbReference type="ChEBI" id="CHEBI:58885"/>
        <dbReference type="ChEBI" id="CHEBI:61548"/>
        <dbReference type="EC" id="2.4.1.15"/>
    </reaction>
</comment>
<comment type="pathway">
    <text evidence="2">Glycan biosynthesis; trehalose biosynthesis.</text>
</comment>
<comment type="subunit">
    <text evidence="2">Homotetramer.</text>
</comment>
<comment type="similarity">
    <text evidence="2">Belongs to the glycosyltransferase 20 family.</text>
</comment>
<proteinExistence type="inferred from homology"/>
<reference key="1">
    <citation type="journal article" date="2001" name="Nature">
        <title>Genome sequence of enterohaemorrhagic Escherichia coli O157:H7.</title>
        <authorList>
            <person name="Perna N.T."/>
            <person name="Plunkett G. III"/>
            <person name="Burland V."/>
            <person name="Mau B."/>
            <person name="Glasner J.D."/>
            <person name="Rose D.J."/>
            <person name="Mayhew G.F."/>
            <person name="Evans P.S."/>
            <person name="Gregor J."/>
            <person name="Kirkpatrick H.A."/>
            <person name="Posfai G."/>
            <person name="Hackett J."/>
            <person name="Klink S."/>
            <person name="Boutin A."/>
            <person name="Shao Y."/>
            <person name="Miller L."/>
            <person name="Grotbeck E.J."/>
            <person name="Davis N.W."/>
            <person name="Lim A."/>
            <person name="Dimalanta E.T."/>
            <person name="Potamousis K."/>
            <person name="Apodaca J."/>
            <person name="Anantharaman T.S."/>
            <person name="Lin J."/>
            <person name="Yen G."/>
            <person name="Schwartz D.C."/>
            <person name="Welch R.A."/>
            <person name="Blattner F.R."/>
        </authorList>
    </citation>
    <scope>NUCLEOTIDE SEQUENCE [LARGE SCALE GENOMIC DNA]</scope>
    <source>
        <strain>O157:H7 / EDL933 / ATCC 700927 / EHEC</strain>
    </source>
</reference>
<reference key="2">
    <citation type="journal article" date="2001" name="DNA Res.">
        <title>Complete genome sequence of enterohemorrhagic Escherichia coli O157:H7 and genomic comparison with a laboratory strain K-12.</title>
        <authorList>
            <person name="Hayashi T."/>
            <person name="Makino K."/>
            <person name="Ohnishi M."/>
            <person name="Kurokawa K."/>
            <person name="Ishii K."/>
            <person name="Yokoyama K."/>
            <person name="Han C.-G."/>
            <person name="Ohtsubo E."/>
            <person name="Nakayama K."/>
            <person name="Murata T."/>
            <person name="Tanaka M."/>
            <person name="Tobe T."/>
            <person name="Iida T."/>
            <person name="Takami H."/>
            <person name="Honda T."/>
            <person name="Sasakawa C."/>
            <person name="Ogasawara N."/>
            <person name="Yasunaga T."/>
            <person name="Kuhara S."/>
            <person name="Shiba T."/>
            <person name="Hattori M."/>
            <person name="Shinagawa H."/>
        </authorList>
    </citation>
    <scope>NUCLEOTIDE SEQUENCE [LARGE SCALE GENOMIC DNA]</scope>
    <source>
        <strain>O157:H7 / Sakai / RIMD 0509952 / EHEC</strain>
    </source>
</reference>
<keyword id="KW-0328">Glycosyltransferase</keyword>
<keyword id="KW-1185">Reference proteome</keyword>
<keyword id="KW-0808">Transferase</keyword>
<sequence length="474" mass="53667">MSRLVVVSNRIAPPDEHAASAGGLAVGILGALKAAGGLWFGWSGETGNEDQPLKKVKKGNITWASFNLSEQDLDEYYNQFSNAVLWPAFHYRLDLVQFQRPAWDGYLRVNALLADKLLPLLQDDDIIWIHDYHLLPFAHELRKRGVNNRIGFFLHIPFPTPEIFNALPTYDTLLEQLCDYDLLGFQTENDRLAFLDCLSNLTRVTTRSAKSHTAWGKAFRTEVYPIGIEPKEIAKQAAGPLPPKLAQLKAELKNVQNIFSVERLDYSKGLPERFLAYEALLEKYPQHHGKIRYTQIAPTSRGDVQAYQDIRHQLENEAGRINGKYGQLGWTPLYYLNQHFDRKLLMKIFRYSDVGLVTPLRDGMNLVAKEYVAAQDPANPGVLVLSQFAGAANELTSALIVNPYDRDEVAVALDRALTMSLAERISRHAEMLDVIVKNDINHWQECFISDLKQIVPRSAESQQRDKVATFPKLV</sequence>
<dbReference type="EC" id="2.4.1.15" evidence="2"/>
<dbReference type="EMBL" id="AE005174">
    <property type="protein sequence ID" value="AAG56885.1"/>
    <property type="molecule type" value="Genomic_DNA"/>
</dbReference>
<dbReference type="EMBL" id="BA000007">
    <property type="protein sequence ID" value="BAB36027.1"/>
    <property type="molecule type" value="Genomic_DNA"/>
</dbReference>
<dbReference type="PIR" id="A85803">
    <property type="entry name" value="A85803"/>
</dbReference>
<dbReference type="PIR" id="D90954">
    <property type="entry name" value="D90954"/>
</dbReference>
<dbReference type="RefSeq" id="NP_310631.1">
    <property type="nucleotide sequence ID" value="NC_002695.1"/>
</dbReference>
<dbReference type="RefSeq" id="WP_000089030.1">
    <property type="nucleotide sequence ID" value="NZ_SDVX01000009.1"/>
</dbReference>
<dbReference type="SMR" id="Q8XCE7"/>
<dbReference type="STRING" id="155864.Z2949"/>
<dbReference type="CAZy" id="GT20">
    <property type="family name" value="Glycosyltransferase Family 20"/>
</dbReference>
<dbReference type="GeneID" id="912524"/>
<dbReference type="KEGG" id="ece:Z2949"/>
<dbReference type="KEGG" id="ecs:ECs_2604"/>
<dbReference type="PATRIC" id="fig|386585.9.peg.2730"/>
<dbReference type="eggNOG" id="COG0380">
    <property type="taxonomic scope" value="Bacteria"/>
</dbReference>
<dbReference type="HOGENOM" id="CLU_002351_7_1_6"/>
<dbReference type="UniPathway" id="UPA00299"/>
<dbReference type="Proteomes" id="UP000000558">
    <property type="component" value="Chromosome"/>
</dbReference>
<dbReference type="Proteomes" id="UP000002519">
    <property type="component" value="Chromosome"/>
</dbReference>
<dbReference type="GO" id="GO:0003825">
    <property type="term" value="F:alpha,alpha-trehalose-phosphate synthase (UDP-forming) activity"/>
    <property type="evidence" value="ECO:0007669"/>
    <property type="project" value="UniProtKB-EC"/>
</dbReference>
<dbReference type="GO" id="GO:0005992">
    <property type="term" value="P:trehalose biosynthetic process"/>
    <property type="evidence" value="ECO:0007669"/>
    <property type="project" value="UniProtKB-UniPathway"/>
</dbReference>
<dbReference type="CDD" id="cd03788">
    <property type="entry name" value="GT20_TPS"/>
    <property type="match status" value="1"/>
</dbReference>
<dbReference type="FunFam" id="3.40.50.2000:FF:000024">
    <property type="entry name" value="Trehalose-6-phosphate synthase"/>
    <property type="match status" value="1"/>
</dbReference>
<dbReference type="Gene3D" id="3.40.50.2000">
    <property type="entry name" value="Glycogen Phosphorylase B"/>
    <property type="match status" value="2"/>
</dbReference>
<dbReference type="InterPro" id="IPR001830">
    <property type="entry name" value="Glyco_trans_20"/>
</dbReference>
<dbReference type="InterPro" id="IPR012766">
    <property type="entry name" value="Trehalose_OtsA"/>
</dbReference>
<dbReference type="NCBIfam" id="NF007513">
    <property type="entry name" value="PRK10117.1"/>
    <property type="match status" value="1"/>
</dbReference>
<dbReference type="NCBIfam" id="TIGR02400">
    <property type="entry name" value="trehalose_OtsA"/>
    <property type="match status" value="1"/>
</dbReference>
<dbReference type="PANTHER" id="PTHR10788:SF106">
    <property type="entry name" value="BCDNA.GH08860"/>
    <property type="match status" value="1"/>
</dbReference>
<dbReference type="PANTHER" id="PTHR10788">
    <property type="entry name" value="TREHALOSE-6-PHOSPHATE SYNTHASE"/>
    <property type="match status" value="1"/>
</dbReference>
<dbReference type="Pfam" id="PF00982">
    <property type="entry name" value="Glyco_transf_20"/>
    <property type="match status" value="1"/>
</dbReference>
<dbReference type="SUPFAM" id="SSF53756">
    <property type="entry name" value="UDP-Glycosyltransferase/glycogen phosphorylase"/>
    <property type="match status" value="1"/>
</dbReference>
<organism>
    <name type="scientific">Escherichia coli O157:H7</name>
    <dbReference type="NCBI Taxonomy" id="83334"/>
    <lineage>
        <taxon>Bacteria</taxon>
        <taxon>Pseudomonadati</taxon>
        <taxon>Pseudomonadota</taxon>
        <taxon>Gammaproteobacteria</taxon>
        <taxon>Enterobacterales</taxon>
        <taxon>Enterobacteriaceae</taxon>
        <taxon>Escherichia</taxon>
    </lineage>
</organism>
<evidence type="ECO:0000250" key="1"/>
<evidence type="ECO:0000250" key="2">
    <source>
        <dbReference type="UniProtKB" id="P31677"/>
    </source>
</evidence>
<name>OTSA_ECO57</name>
<accession>Q8XCE7</accession>
<feature type="initiator methionine" description="Removed" evidence="1">
    <location>
        <position position="1"/>
    </location>
</feature>
<feature type="chain" id="PRO_0000122490" description="Trehalose-6-phosphate synthase">
    <location>
        <begin position="2"/>
        <end position="474"/>
    </location>
</feature>
<feature type="binding site" evidence="2">
    <location>
        <position position="10"/>
    </location>
    <ligand>
        <name>D-glucose 6-phosphate</name>
        <dbReference type="ChEBI" id="CHEBI:61548"/>
    </ligand>
</feature>
<feature type="binding site" evidence="2">
    <location>
        <begin position="22"/>
        <end position="23"/>
    </location>
    <ligand>
        <name>UDP-alpha-D-glucose</name>
        <dbReference type="ChEBI" id="CHEBI:58885"/>
    </ligand>
</feature>
<feature type="binding site" evidence="2">
    <location>
        <position position="77"/>
    </location>
    <ligand>
        <name>D-glucose 6-phosphate</name>
        <dbReference type="ChEBI" id="CHEBI:61548"/>
    </ligand>
</feature>
<feature type="binding site" evidence="2">
    <location>
        <position position="131"/>
    </location>
    <ligand>
        <name>D-glucose 6-phosphate</name>
        <dbReference type="ChEBI" id="CHEBI:61548"/>
    </ligand>
</feature>
<feature type="binding site" evidence="2">
    <location>
        <position position="263"/>
    </location>
    <ligand>
        <name>UDP-alpha-D-glucose</name>
        <dbReference type="ChEBI" id="CHEBI:58885"/>
    </ligand>
</feature>
<feature type="binding site" evidence="2">
    <location>
        <position position="268"/>
    </location>
    <ligand>
        <name>UDP-alpha-D-glucose</name>
        <dbReference type="ChEBI" id="CHEBI:58885"/>
    </ligand>
</feature>
<feature type="binding site" evidence="2">
    <location>
        <position position="301"/>
    </location>
    <ligand>
        <name>D-glucose 6-phosphate</name>
        <dbReference type="ChEBI" id="CHEBI:61548"/>
    </ligand>
</feature>
<feature type="binding site" evidence="2">
    <location>
        <position position="340"/>
    </location>
    <ligand>
        <name>UDP-alpha-D-glucose</name>
        <dbReference type="ChEBI" id="CHEBI:58885"/>
    </ligand>
</feature>
<feature type="binding site" evidence="2">
    <location>
        <begin position="366"/>
        <end position="370"/>
    </location>
    <ligand>
        <name>UDP-alpha-D-glucose</name>
        <dbReference type="ChEBI" id="CHEBI:58885"/>
    </ligand>
</feature>
<feature type="site" description="Involved in alpha anomer selectivity" evidence="2">
    <location>
        <position position="86"/>
    </location>
</feature>
<feature type="site" description="Involved in alpha anomer selectivity" evidence="2">
    <location>
        <position position="156"/>
    </location>
</feature>
<protein>
    <recommendedName>
        <fullName evidence="2">Trehalose-6-phosphate synthase</fullName>
        <shortName evidence="2">TPS</shortName>
        <ecNumber evidence="2">2.4.1.15</ecNumber>
    </recommendedName>
    <alternativeName>
        <fullName evidence="2">Alpha,alpha-trehalose-phosphate synthase [UDP-forming]</fullName>
    </alternativeName>
    <alternativeName>
        <fullName evidence="2">Osmoregulatory trehalose synthesis protein A</fullName>
        <shortName evidence="2">OtsA</shortName>
    </alternativeName>
    <alternativeName>
        <fullName evidence="2">UDP-glucose-glucosephosphate glucosyltransferase</fullName>
    </alternativeName>
</protein>